<keyword id="KW-0164">Citrullination</keyword>
<keyword id="KW-0175">Coiled coil</keyword>
<keyword id="KW-1017">Isopeptide bond</keyword>
<keyword id="KW-0489">Methyltransferase</keyword>
<keyword id="KW-0539">Nucleus</keyword>
<keyword id="KW-0597">Phosphoprotein</keyword>
<keyword id="KW-1185">Reference proteome</keyword>
<keyword id="KW-0690">Ribosome biogenesis</keyword>
<keyword id="KW-0698">rRNA processing</keyword>
<keyword id="KW-0949">S-adenosyl-L-methionine</keyword>
<keyword id="KW-0808">Transferase</keyword>
<keyword id="KW-0832">Ubl conjugation</keyword>
<reference key="1">
    <citation type="submission" date="2004-11" db="EMBL/GenBank/DDBJ databases">
        <authorList>
            <consortium name="The German cDNA consortium"/>
        </authorList>
    </citation>
    <scope>NUCLEOTIDE SEQUENCE [LARGE SCALE MRNA]</scope>
    <source>
        <tissue>Kidney</tissue>
    </source>
</reference>
<proteinExistence type="evidence at transcript level"/>
<name>SPB1_PONAB</name>
<comment type="function">
    <text evidence="3">RNA 2'-O-methyltransferase involved in the processing of the 34S pre-rRNA to 18S rRNA and in 40S ribosomal subunit formation.</text>
</comment>
<comment type="catalytic activity">
    <reaction evidence="3">
        <text>a ribonucleotide in rRNA + S-adenosyl-L-methionine = a 2'-O-methylribonucleotide in rRNA + S-adenosyl-L-homocysteine + H(+)</text>
        <dbReference type="Rhea" id="RHEA:48628"/>
        <dbReference type="Rhea" id="RHEA-COMP:12164"/>
        <dbReference type="Rhea" id="RHEA-COMP:12165"/>
        <dbReference type="ChEBI" id="CHEBI:15378"/>
        <dbReference type="ChEBI" id="CHEBI:57856"/>
        <dbReference type="ChEBI" id="CHEBI:59789"/>
        <dbReference type="ChEBI" id="CHEBI:90675"/>
        <dbReference type="ChEBI" id="CHEBI:90676"/>
    </reaction>
</comment>
<comment type="subunit">
    <text evidence="3">Interacts with NIP7.</text>
</comment>
<comment type="subcellular location">
    <subcellularLocation>
        <location evidence="3">Nucleus</location>
        <location evidence="3">Nucleolus</location>
    </subcellularLocation>
</comment>
<comment type="PTM">
    <text evidence="2">Citrullinated by PADI4.</text>
</comment>
<comment type="similarity">
    <text evidence="3">Belongs to the class I-like SAM-binding methyltransferase superfamily. RNA methyltransferase RlmE family. SPB1 subfamily.</text>
</comment>
<sequence length="841" mass="95795">MGKKGKVGKSRRDKFYHLAKETGYRSRSAFKLIQLNRRFQFLQKARALLDLCAAPGGWLQVAAKFMPVSSLIVGVDLVPIKPLPNVVTLQEDITTERCRQALRKELKTWKVDVVLNDGAPNVGASWVHDAYSQAHLTLMALRLACDFLARGGSFITKVFRSRDYQPLLWIFQQLFRRVQATKPQASRHESAEIFVVCQGFLAPDKVDSKFFDPKFAFKEVEVQAKTVTELVTKKKPKAEGYAEGDLTLYHRTSVTDFLRAANPVDFLSKASEIMVDDEELAQHPATTEDIRVCCQDIRVLGRKELRSLLNWRTKLRRYVAKKLKEQAKALDISLSSGEEDEGNEEDSTAGTTEQPSKEEEEEEQLNQTLAEMKAQEVAELKRKKKKLLREQRKQRERVELKMDLPGVSIADEGETGMFSLRTIRGQQLLEEVTQGDMSAADTFLSDLPRDDIYVSDVEDDGDDTSLDSDLDPEELAGVRGHQGLRDQKRVRLTEVQDDKEEEEEEENPLLVPLEEKAVLQEEQANLWFSKGSFAGIEDDADEALEISQAQLLFESQRKGRQQQLPQTLPSCLKTEIMSPLYQDEAPKGTEASSGTEAATGLKGEEKDGISDSDSSSSSEEEESWEPVRGKKRSRGPKSDDDGFEIVPIEDPAKHRILDPEGLALGAVIASSKKAKRDLIDNSFNRYTFNEDEGELPEWFVQEEKQHRIRQLPIGKKEMEHYRKRWREINARPIKKVAEAKARKKRRMLKRLEQTRKKAEAVVNTVDISEREKVAQLRSLYKKAGLGKEKRHVTYVVAKKGVGRKVRRPAGVRGHFKVVDSRMKKDQRAQQRKEQKKKHKRK</sequence>
<dbReference type="EC" id="2.1.1.-" evidence="3"/>
<dbReference type="EMBL" id="CR858941">
    <property type="protein sequence ID" value="CAH91139.1"/>
    <property type="molecule type" value="mRNA"/>
</dbReference>
<dbReference type="RefSeq" id="NP_001125667.1">
    <property type="nucleotide sequence ID" value="NM_001132195.2"/>
</dbReference>
<dbReference type="RefSeq" id="XP_054391141.2">
    <property type="nucleotide sequence ID" value="XM_054535166.2"/>
</dbReference>
<dbReference type="SMR" id="Q5RAS1"/>
<dbReference type="FunCoup" id="Q5RAS1">
    <property type="interactions" value="2652"/>
</dbReference>
<dbReference type="STRING" id="9601.ENSPPYP00000009585"/>
<dbReference type="Ensembl" id="ENSPPYT00000009969.3">
    <property type="protein sequence ID" value="ENSPPYP00000009586.3"/>
    <property type="gene ID" value="ENSPPYG00000008532.3"/>
</dbReference>
<dbReference type="GeneID" id="100172587"/>
<dbReference type="KEGG" id="pon:100172587"/>
<dbReference type="CTD" id="117246"/>
<dbReference type="eggNOG" id="KOG1098">
    <property type="taxonomic scope" value="Eukaryota"/>
</dbReference>
<dbReference type="GeneTree" id="ENSGT00550000075004"/>
<dbReference type="InParanoid" id="Q5RAS1"/>
<dbReference type="OMA" id="QRKDKYY"/>
<dbReference type="OrthoDB" id="289250at2759"/>
<dbReference type="Proteomes" id="UP000001595">
    <property type="component" value="Chromosome 17"/>
</dbReference>
<dbReference type="GO" id="GO:0005694">
    <property type="term" value="C:chromosome"/>
    <property type="evidence" value="ECO:0007669"/>
    <property type="project" value="Ensembl"/>
</dbReference>
<dbReference type="GO" id="GO:0005730">
    <property type="term" value="C:nucleolus"/>
    <property type="evidence" value="ECO:0007669"/>
    <property type="project" value="UniProtKB-SubCell"/>
</dbReference>
<dbReference type="GO" id="GO:0005654">
    <property type="term" value="C:nucleoplasm"/>
    <property type="evidence" value="ECO:0007669"/>
    <property type="project" value="Ensembl"/>
</dbReference>
<dbReference type="GO" id="GO:0030687">
    <property type="term" value="C:preribosome, large subunit precursor"/>
    <property type="evidence" value="ECO:0007669"/>
    <property type="project" value="TreeGrafter"/>
</dbReference>
<dbReference type="GO" id="GO:0030688">
    <property type="term" value="C:preribosome, small subunit precursor"/>
    <property type="evidence" value="ECO:0007669"/>
    <property type="project" value="UniProtKB-UniRule"/>
</dbReference>
<dbReference type="GO" id="GO:0062105">
    <property type="term" value="F:RNA 2'-O-methyltransferase activity"/>
    <property type="evidence" value="ECO:0000250"/>
    <property type="project" value="UniProtKB"/>
</dbReference>
<dbReference type="GO" id="GO:0016435">
    <property type="term" value="F:rRNA (guanine) methyltransferase activity"/>
    <property type="evidence" value="ECO:0007669"/>
    <property type="project" value="TreeGrafter"/>
</dbReference>
<dbReference type="GO" id="GO:0008650">
    <property type="term" value="F:rRNA (uridine-2'-O-)-methyltransferase activity"/>
    <property type="evidence" value="ECO:0007669"/>
    <property type="project" value="TreeGrafter"/>
</dbReference>
<dbReference type="GO" id="GO:0000466">
    <property type="term" value="P:maturation of 5.8S rRNA from tricistronic rRNA transcript (SSU-rRNA, 5.8S rRNA, LSU-rRNA)"/>
    <property type="evidence" value="ECO:0007669"/>
    <property type="project" value="TreeGrafter"/>
</dbReference>
<dbReference type="GO" id="GO:0000463">
    <property type="term" value="P:maturation of LSU-rRNA from tricistronic rRNA transcript (SSU-rRNA, 5.8S rRNA, LSU-rRNA)"/>
    <property type="evidence" value="ECO:0007669"/>
    <property type="project" value="TreeGrafter"/>
</dbReference>
<dbReference type="GO" id="GO:0001510">
    <property type="term" value="P:RNA methylation"/>
    <property type="evidence" value="ECO:0000250"/>
    <property type="project" value="UniProtKB"/>
</dbReference>
<dbReference type="FunFam" id="3.40.50.150:FF:000004">
    <property type="entry name" value="AdoMet-dependent rRNA methyltransferase SPB1"/>
    <property type="match status" value="1"/>
</dbReference>
<dbReference type="Gene3D" id="3.40.50.150">
    <property type="entry name" value="Vaccinia Virus protein VP39"/>
    <property type="match status" value="1"/>
</dbReference>
<dbReference type="HAMAP" id="MF_01547">
    <property type="entry name" value="RNA_methyltr_E"/>
    <property type="match status" value="1"/>
</dbReference>
<dbReference type="HAMAP" id="MF_03163">
    <property type="entry name" value="RNA_methyltr_E_SPB1"/>
    <property type="match status" value="1"/>
</dbReference>
<dbReference type="InterPro" id="IPR050082">
    <property type="entry name" value="RNA_methyltr_RlmE"/>
</dbReference>
<dbReference type="InterPro" id="IPR002877">
    <property type="entry name" value="RNA_MeTrfase_FtsJ_dom"/>
</dbReference>
<dbReference type="InterPro" id="IPR015507">
    <property type="entry name" value="rRNA-MeTfrase_E"/>
</dbReference>
<dbReference type="InterPro" id="IPR012920">
    <property type="entry name" value="rRNA_MeTfrase_SPB1-like_C"/>
</dbReference>
<dbReference type="InterPro" id="IPR024576">
    <property type="entry name" value="rRNA_MeTfrase_Spb1_DUF3381"/>
</dbReference>
<dbReference type="InterPro" id="IPR029063">
    <property type="entry name" value="SAM-dependent_MTases_sf"/>
</dbReference>
<dbReference type="InterPro" id="IPR028589">
    <property type="entry name" value="SPB1-like"/>
</dbReference>
<dbReference type="PANTHER" id="PTHR10920:SF13">
    <property type="entry name" value="PRE-RRNA 2'-O-RIBOSE RNA METHYLTRANSFERASE FTSJ3"/>
    <property type="match status" value="1"/>
</dbReference>
<dbReference type="PANTHER" id="PTHR10920">
    <property type="entry name" value="RIBOSOMAL RNA METHYLTRANSFERASE"/>
    <property type="match status" value="1"/>
</dbReference>
<dbReference type="Pfam" id="PF11861">
    <property type="entry name" value="DUF3381"/>
    <property type="match status" value="1"/>
</dbReference>
<dbReference type="Pfam" id="PF01728">
    <property type="entry name" value="FtsJ"/>
    <property type="match status" value="1"/>
</dbReference>
<dbReference type="Pfam" id="PF07780">
    <property type="entry name" value="Spb1_C"/>
    <property type="match status" value="1"/>
</dbReference>
<dbReference type="SUPFAM" id="SSF53335">
    <property type="entry name" value="S-adenosyl-L-methionine-dependent methyltransferases"/>
    <property type="match status" value="1"/>
</dbReference>
<organism>
    <name type="scientific">Pongo abelii</name>
    <name type="common">Sumatran orangutan</name>
    <name type="synonym">Pongo pygmaeus abelii</name>
    <dbReference type="NCBI Taxonomy" id="9601"/>
    <lineage>
        <taxon>Eukaryota</taxon>
        <taxon>Metazoa</taxon>
        <taxon>Chordata</taxon>
        <taxon>Craniata</taxon>
        <taxon>Vertebrata</taxon>
        <taxon>Euteleostomi</taxon>
        <taxon>Mammalia</taxon>
        <taxon>Eutheria</taxon>
        <taxon>Euarchontoglires</taxon>
        <taxon>Primates</taxon>
        <taxon>Haplorrhini</taxon>
        <taxon>Catarrhini</taxon>
        <taxon>Hominidae</taxon>
        <taxon>Pongo</taxon>
    </lineage>
</organism>
<accession>Q5RAS1</accession>
<protein>
    <recommendedName>
        <fullName evidence="3">pre-rRNA 2'-O-ribose RNA methyltransferase FTSJ3</fullName>
        <ecNumber evidence="3">2.1.1.-</ecNumber>
    </recommendedName>
    <alternativeName>
        <fullName evidence="3">Protein ftsJ homolog 3</fullName>
    </alternativeName>
    <alternativeName>
        <fullName evidence="3">Putative rRNA methyltransferase 3</fullName>
    </alternativeName>
</protein>
<gene>
    <name evidence="3" type="primary">FTSJ3</name>
</gene>
<evidence type="ECO:0000250" key="1">
    <source>
        <dbReference type="UniProtKB" id="Q8IY81"/>
    </source>
</evidence>
<evidence type="ECO:0000250" key="2">
    <source>
        <dbReference type="UniProtKB" id="Q9DBE9"/>
    </source>
</evidence>
<evidence type="ECO:0000255" key="3">
    <source>
        <dbReference type="HAMAP-Rule" id="MF_03163"/>
    </source>
</evidence>
<evidence type="ECO:0000256" key="4">
    <source>
        <dbReference type="SAM" id="MobiDB-lite"/>
    </source>
</evidence>
<feature type="chain" id="PRO_0000155579" description="pre-rRNA 2'-O-ribose RNA methyltransferase FTSJ3">
    <location>
        <begin position="1"/>
        <end position="841"/>
    </location>
</feature>
<feature type="region of interest" description="Disordered" evidence="4">
    <location>
        <begin position="332"/>
        <end position="366"/>
    </location>
</feature>
<feature type="region of interest" description="Disordered" evidence="4">
    <location>
        <begin position="454"/>
        <end position="482"/>
    </location>
</feature>
<feature type="region of interest" description="Disordered" evidence="4">
    <location>
        <begin position="579"/>
        <end position="654"/>
    </location>
</feature>
<feature type="region of interest" description="Disordered" evidence="4">
    <location>
        <begin position="805"/>
        <end position="841"/>
    </location>
</feature>
<feature type="coiled-coil region" evidence="3">
    <location>
        <begin position="356"/>
        <end position="404"/>
    </location>
</feature>
<feature type="coiled-coil region" evidence="3">
    <location>
        <begin position="733"/>
        <end position="771"/>
    </location>
</feature>
<feature type="compositionally biased region" description="Acidic residues" evidence="4">
    <location>
        <begin position="337"/>
        <end position="347"/>
    </location>
</feature>
<feature type="compositionally biased region" description="Acidic residues" evidence="4">
    <location>
        <begin position="456"/>
        <end position="474"/>
    </location>
</feature>
<feature type="compositionally biased region" description="Basic residues" evidence="4">
    <location>
        <begin position="805"/>
        <end position="815"/>
    </location>
</feature>
<feature type="compositionally biased region" description="Basic and acidic residues" evidence="4">
    <location>
        <begin position="816"/>
        <end position="832"/>
    </location>
</feature>
<feature type="active site" description="Proton acceptor" evidence="3">
    <location>
        <position position="157"/>
    </location>
</feature>
<feature type="binding site" evidence="3">
    <location>
        <position position="56"/>
    </location>
    <ligand>
        <name>S-adenosyl-L-methionine</name>
        <dbReference type="ChEBI" id="CHEBI:59789"/>
    </ligand>
</feature>
<feature type="binding site" evidence="3">
    <location>
        <position position="58"/>
    </location>
    <ligand>
        <name>S-adenosyl-L-methionine</name>
        <dbReference type="ChEBI" id="CHEBI:59789"/>
    </ligand>
</feature>
<feature type="binding site" evidence="3">
    <location>
        <position position="76"/>
    </location>
    <ligand>
        <name>S-adenosyl-L-methionine</name>
        <dbReference type="ChEBI" id="CHEBI:59789"/>
    </ligand>
</feature>
<feature type="binding site" evidence="3">
    <location>
        <position position="92"/>
    </location>
    <ligand>
        <name>S-adenosyl-L-methionine</name>
        <dbReference type="ChEBI" id="CHEBI:59789"/>
    </ligand>
</feature>
<feature type="binding site" evidence="3">
    <location>
        <position position="117"/>
    </location>
    <ligand>
        <name>S-adenosyl-L-methionine</name>
        <dbReference type="ChEBI" id="CHEBI:59789"/>
    </ligand>
</feature>
<feature type="modified residue" description="Phosphoserine" evidence="1">
    <location>
        <position position="333"/>
    </location>
</feature>
<feature type="modified residue" description="Phosphoserine" evidence="1">
    <location>
        <position position="335"/>
    </location>
</feature>
<feature type="modified residue" description="Phosphoserine" evidence="1">
    <location>
        <position position="336"/>
    </location>
</feature>
<feature type="modified residue" description="Phosphoserine" evidence="1">
    <location>
        <position position="347"/>
    </location>
</feature>
<feature type="modified residue" description="Phosphoserine" evidence="1">
    <location>
        <position position="356"/>
    </location>
</feature>
<feature type="modified residue" description="Citrulline" evidence="2">
    <location>
        <position position="389"/>
    </location>
</feature>
<feature type="modified residue" description="Phosphoserine" evidence="1">
    <location>
        <position position="547"/>
    </location>
</feature>
<feature type="modified residue" description="Phosphothreonine" evidence="1">
    <location>
        <position position="567"/>
    </location>
</feature>
<feature type="modified residue" description="Phosphoserine" evidence="1">
    <location>
        <position position="578"/>
    </location>
</feature>
<feature type="modified residue" description="Phosphoserine" evidence="1">
    <location>
        <position position="638"/>
    </location>
</feature>
<feature type="modified residue" description="Phosphoserine" evidence="1">
    <location>
        <position position="670"/>
    </location>
</feature>
<feature type="modified residue" description="Phosphoserine" evidence="1">
    <location>
        <position position="682"/>
    </location>
</feature>
<feature type="modified residue" description="Citrulline" evidence="2">
    <location>
        <position position="777"/>
    </location>
</feature>
<feature type="cross-link" description="Glycyl lysine isopeptide (Lys-Gly) (interchain with G-Cter in SUMO2)" evidence="1">
    <location>
        <position position="357"/>
    </location>
</feature>
<feature type="cross-link" description="Glycyl lysine isopeptide (Lys-Gly) (interchain with G-Cter in SUMO2)" evidence="1">
    <location>
        <position position="573"/>
    </location>
</feature>
<feature type="cross-link" description="Glycyl lysine isopeptide (Lys-Gly) (interchain with G-Cter in SUMO2)" evidence="1">
    <location>
        <position position="637"/>
    </location>
</feature>
<feature type="cross-link" description="Glycyl lysine isopeptide (Lys-Gly) (interchain with G-Cter in SUMO2)" evidence="1">
    <location>
        <position position="653"/>
    </location>
</feature>
<feature type="cross-link" description="Glycyl lysine isopeptide (Lys-Gly) (interchain with G-Cter in SUMO2)" evidence="1">
    <location>
        <position position="672"/>
    </location>
</feature>
<feature type="cross-link" description="Glycyl lysine isopeptide (Lys-Gly) (interchain with G-Cter in SUMO2)" evidence="1">
    <location>
        <position position="704"/>
    </location>
</feature>